<protein>
    <recommendedName>
        <fullName evidence="1">Large ribosomal subunit protein bL20</fullName>
    </recommendedName>
    <alternativeName>
        <fullName evidence="2">50S ribosomal protein L20</fullName>
    </alternativeName>
</protein>
<comment type="function">
    <text evidence="1">Binds directly to 23S ribosomal RNA and is necessary for the in vitro assembly process of the 50S ribosomal subunit. It is not involved in the protein synthesizing functions of that subunit.</text>
</comment>
<comment type="similarity">
    <text evidence="1">Belongs to the bacterial ribosomal protein bL20 family.</text>
</comment>
<dbReference type="EMBL" id="CP000964">
    <property type="protein sequence ID" value="ACI11045.1"/>
    <property type="molecule type" value="Genomic_DNA"/>
</dbReference>
<dbReference type="SMR" id="B5XQC9"/>
<dbReference type="KEGG" id="kpe:KPK_2141"/>
<dbReference type="HOGENOM" id="CLU_123265_0_1_6"/>
<dbReference type="Proteomes" id="UP000001734">
    <property type="component" value="Chromosome"/>
</dbReference>
<dbReference type="GO" id="GO:1990904">
    <property type="term" value="C:ribonucleoprotein complex"/>
    <property type="evidence" value="ECO:0007669"/>
    <property type="project" value="UniProtKB-KW"/>
</dbReference>
<dbReference type="GO" id="GO:0005840">
    <property type="term" value="C:ribosome"/>
    <property type="evidence" value="ECO:0007669"/>
    <property type="project" value="UniProtKB-KW"/>
</dbReference>
<dbReference type="GO" id="GO:0019843">
    <property type="term" value="F:rRNA binding"/>
    <property type="evidence" value="ECO:0007669"/>
    <property type="project" value="UniProtKB-UniRule"/>
</dbReference>
<dbReference type="GO" id="GO:0003735">
    <property type="term" value="F:structural constituent of ribosome"/>
    <property type="evidence" value="ECO:0007669"/>
    <property type="project" value="InterPro"/>
</dbReference>
<dbReference type="GO" id="GO:0000027">
    <property type="term" value="P:ribosomal large subunit assembly"/>
    <property type="evidence" value="ECO:0007669"/>
    <property type="project" value="UniProtKB-UniRule"/>
</dbReference>
<dbReference type="GO" id="GO:0006412">
    <property type="term" value="P:translation"/>
    <property type="evidence" value="ECO:0007669"/>
    <property type="project" value="InterPro"/>
</dbReference>
<dbReference type="CDD" id="cd07026">
    <property type="entry name" value="Ribosomal_L20"/>
    <property type="match status" value="1"/>
</dbReference>
<dbReference type="FunFam" id="1.10.1900.20:FF:000001">
    <property type="entry name" value="50S ribosomal protein L20"/>
    <property type="match status" value="1"/>
</dbReference>
<dbReference type="Gene3D" id="6.10.160.10">
    <property type="match status" value="1"/>
</dbReference>
<dbReference type="Gene3D" id="1.10.1900.20">
    <property type="entry name" value="Ribosomal protein L20"/>
    <property type="match status" value="1"/>
</dbReference>
<dbReference type="HAMAP" id="MF_00382">
    <property type="entry name" value="Ribosomal_bL20"/>
    <property type="match status" value="1"/>
</dbReference>
<dbReference type="InterPro" id="IPR005813">
    <property type="entry name" value="Ribosomal_bL20"/>
</dbReference>
<dbReference type="InterPro" id="IPR049946">
    <property type="entry name" value="RIBOSOMAL_L20_CS"/>
</dbReference>
<dbReference type="InterPro" id="IPR035566">
    <property type="entry name" value="Ribosomal_protein_bL20_C"/>
</dbReference>
<dbReference type="NCBIfam" id="TIGR01032">
    <property type="entry name" value="rplT_bact"/>
    <property type="match status" value="1"/>
</dbReference>
<dbReference type="PANTHER" id="PTHR10986">
    <property type="entry name" value="39S RIBOSOMAL PROTEIN L20"/>
    <property type="match status" value="1"/>
</dbReference>
<dbReference type="Pfam" id="PF00453">
    <property type="entry name" value="Ribosomal_L20"/>
    <property type="match status" value="1"/>
</dbReference>
<dbReference type="PRINTS" id="PR00062">
    <property type="entry name" value="RIBOSOMALL20"/>
</dbReference>
<dbReference type="SUPFAM" id="SSF74731">
    <property type="entry name" value="Ribosomal protein L20"/>
    <property type="match status" value="1"/>
</dbReference>
<dbReference type="PROSITE" id="PS00937">
    <property type="entry name" value="RIBOSOMAL_L20"/>
    <property type="match status" value="1"/>
</dbReference>
<evidence type="ECO:0000255" key="1">
    <source>
        <dbReference type="HAMAP-Rule" id="MF_00382"/>
    </source>
</evidence>
<evidence type="ECO:0000305" key="2"/>
<accession>B5XQC9</accession>
<keyword id="KW-0687">Ribonucleoprotein</keyword>
<keyword id="KW-0689">Ribosomal protein</keyword>
<keyword id="KW-0694">RNA-binding</keyword>
<keyword id="KW-0699">rRNA-binding</keyword>
<name>RL20_KLEP3</name>
<reference key="1">
    <citation type="journal article" date="2008" name="PLoS Genet.">
        <title>Complete genome sequence of the N2-fixing broad host range endophyte Klebsiella pneumoniae 342 and virulence predictions verified in mice.</title>
        <authorList>
            <person name="Fouts D.E."/>
            <person name="Tyler H.L."/>
            <person name="DeBoy R.T."/>
            <person name="Daugherty S."/>
            <person name="Ren Q."/>
            <person name="Badger J.H."/>
            <person name="Durkin A.S."/>
            <person name="Huot H."/>
            <person name="Shrivastava S."/>
            <person name="Kothari S."/>
            <person name="Dodson R.J."/>
            <person name="Mohamoud Y."/>
            <person name="Khouri H."/>
            <person name="Roesch L.F.W."/>
            <person name="Krogfelt K.A."/>
            <person name="Struve C."/>
            <person name="Triplett E.W."/>
            <person name="Methe B.A."/>
        </authorList>
    </citation>
    <scope>NUCLEOTIDE SEQUENCE [LARGE SCALE GENOMIC DNA]</scope>
    <source>
        <strain>342</strain>
    </source>
</reference>
<organism>
    <name type="scientific">Klebsiella pneumoniae (strain 342)</name>
    <dbReference type="NCBI Taxonomy" id="507522"/>
    <lineage>
        <taxon>Bacteria</taxon>
        <taxon>Pseudomonadati</taxon>
        <taxon>Pseudomonadota</taxon>
        <taxon>Gammaproteobacteria</taxon>
        <taxon>Enterobacterales</taxon>
        <taxon>Enterobacteriaceae</taxon>
        <taxon>Klebsiella/Raoultella group</taxon>
        <taxon>Klebsiella</taxon>
        <taxon>Klebsiella pneumoniae complex</taxon>
    </lineage>
</organism>
<sequence>MARVKRGVIARARHKKILKQAKGYYGARSRVYRVAFQAVIKAGQYAYRDRRQRKRQFRQLWIARINAAARQNGISYSKFINGLKKASVEIDRKILADIAVFDKVAFTALVEKAKAALA</sequence>
<gene>
    <name evidence="1" type="primary">rplT</name>
    <name type="ordered locus">KPK_2141</name>
</gene>
<feature type="chain" id="PRO_1000122328" description="Large ribosomal subunit protein bL20">
    <location>
        <begin position="1"/>
        <end position="118"/>
    </location>
</feature>
<proteinExistence type="inferred from homology"/>